<accession>Q21874</accession>
<dbReference type="EMBL" id="Z70287">
    <property type="protein sequence ID" value="CAA94300.2"/>
    <property type="molecule type" value="Genomic_DNA"/>
</dbReference>
<dbReference type="PIR" id="T24088">
    <property type="entry name" value="T24088"/>
</dbReference>
<dbReference type="RefSeq" id="NP_501890.2">
    <property type="nucleotide sequence ID" value="NM_069489.4"/>
</dbReference>
<dbReference type="FunCoup" id="Q21874">
    <property type="interactions" value="48"/>
</dbReference>
<dbReference type="STRING" id="6239.R09E10.5.1"/>
<dbReference type="iPTMnet" id="Q21874"/>
<dbReference type="PaxDb" id="6239-R09E10.5"/>
<dbReference type="PeptideAtlas" id="Q21874"/>
<dbReference type="EnsemblMetazoa" id="R09E10.5.1">
    <property type="protein sequence ID" value="R09E10.5.1"/>
    <property type="gene ID" value="WBGene00011175"/>
</dbReference>
<dbReference type="GeneID" id="187743"/>
<dbReference type="KEGG" id="cel:CELE_R09E10.5"/>
<dbReference type="UCSC" id="R09E10.5">
    <property type="organism name" value="c. elegans"/>
</dbReference>
<dbReference type="AGR" id="WB:WBGene00011175"/>
<dbReference type="CTD" id="187743"/>
<dbReference type="WormBase" id="R09E10.5">
    <property type="protein sequence ID" value="CE48460"/>
    <property type="gene ID" value="WBGene00011175"/>
</dbReference>
<dbReference type="eggNOG" id="KOG4291">
    <property type="taxonomic scope" value="Eukaryota"/>
</dbReference>
<dbReference type="GeneTree" id="ENSGT00730000110943"/>
<dbReference type="HOGENOM" id="CLU_004798_0_0_1"/>
<dbReference type="InParanoid" id="Q21874"/>
<dbReference type="OMA" id="LMPITWY"/>
<dbReference type="OrthoDB" id="9972657at2759"/>
<dbReference type="PRO" id="PR:Q21874"/>
<dbReference type="Proteomes" id="UP000001940">
    <property type="component" value="Chromosome IV"/>
</dbReference>
<dbReference type="Bgee" id="WBGene00011175">
    <property type="expression patterns" value="Expressed in pharyngeal muscle cell (C elegans) and 3 other cell types or tissues"/>
</dbReference>
<dbReference type="GO" id="GO:0005615">
    <property type="term" value="C:extracellular space"/>
    <property type="evidence" value="ECO:0000318"/>
    <property type="project" value="GO_Central"/>
</dbReference>
<dbReference type="GO" id="GO:0016020">
    <property type="term" value="C:membrane"/>
    <property type="evidence" value="ECO:0007669"/>
    <property type="project" value="UniProtKB-SubCell"/>
</dbReference>
<dbReference type="GO" id="GO:0007160">
    <property type="term" value="P:cell-matrix adhesion"/>
    <property type="evidence" value="ECO:0007669"/>
    <property type="project" value="InterPro"/>
</dbReference>
<dbReference type="InterPro" id="IPR005533">
    <property type="entry name" value="AMOP_dom"/>
</dbReference>
<dbReference type="InterPro" id="IPR056075">
    <property type="entry name" value="DUF7658"/>
</dbReference>
<dbReference type="InterPro" id="IPR051495">
    <property type="entry name" value="Epithelial_Barrier/Signaling"/>
</dbReference>
<dbReference type="InterPro" id="IPR057017">
    <property type="entry name" value="F54D1_6-like_C"/>
</dbReference>
<dbReference type="InterPro" id="IPR057018">
    <property type="entry name" value="F54D1_6-like_Ig-like"/>
</dbReference>
<dbReference type="InterPro" id="IPR057019">
    <property type="entry name" value="F54D1_6-like_Ig-like_2"/>
</dbReference>
<dbReference type="InterPro" id="IPR003886">
    <property type="entry name" value="NIDO_dom"/>
</dbReference>
<dbReference type="PANTHER" id="PTHR13802">
    <property type="entry name" value="MUCIN 4-RELATED"/>
    <property type="match status" value="1"/>
</dbReference>
<dbReference type="PANTHER" id="PTHR13802:SF61">
    <property type="entry name" value="PROTEIN CBG04396"/>
    <property type="match status" value="1"/>
</dbReference>
<dbReference type="Pfam" id="PF03782">
    <property type="entry name" value="AMOP"/>
    <property type="match status" value="1"/>
</dbReference>
<dbReference type="Pfam" id="PF24678">
    <property type="entry name" value="DUF7658"/>
    <property type="match status" value="1"/>
</dbReference>
<dbReference type="Pfam" id="PF24469">
    <property type="entry name" value="F54D1_6_C"/>
    <property type="match status" value="1"/>
</dbReference>
<dbReference type="Pfam" id="PF24462">
    <property type="entry name" value="Ig_F54D1_6"/>
    <property type="match status" value="1"/>
</dbReference>
<dbReference type="Pfam" id="PF24464">
    <property type="entry name" value="Ig_F54D1_6_2"/>
    <property type="match status" value="1"/>
</dbReference>
<dbReference type="Pfam" id="PF06119">
    <property type="entry name" value="NIDO"/>
    <property type="match status" value="1"/>
</dbReference>
<dbReference type="SMART" id="SM00723">
    <property type="entry name" value="AMOP"/>
    <property type="match status" value="1"/>
</dbReference>
<dbReference type="SMART" id="SM00539">
    <property type="entry name" value="NIDO"/>
    <property type="match status" value="1"/>
</dbReference>
<dbReference type="PROSITE" id="PS50856">
    <property type="entry name" value="AMOP"/>
    <property type="match status" value="1"/>
</dbReference>
<dbReference type="PROSITE" id="PS51220">
    <property type="entry name" value="NIDO"/>
    <property type="match status" value="1"/>
</dbReference>
<protein>
    <recommendedName>
        <fullName>Uncharacterized protein R09E10.5</fullName>
    </recommendedName>
</protein>
<sequence>MRRGCRHHLAAVVLLIATFPPLAYNQNIGGINQNIGGTPQNPTINQVSPGQIFSGTGNNPFYGVNLVPFGPEAGDLMVNPSMLTSGMTIDLYMFFPYYGGLYNYTTISVNGYLGFATVLDQGPTINVGPETTDWPRQEDPAMIAPYLCKQQVPQQGNPARRAGVYYRLLLRQSLFGRESNSNLNLGGTLQQNAFFGQQASQACPGTADSYVRCDSNSDYFLDQMMIWVQEGVAGGAMFRADAAVVVTWYNTASAISGRSDIDAGQTGTYQVIWLTDSTARLSYVIINYDRLGFDAQDFRGNSRSGRCRAVFNGGNHTGTVEVDPTQPYKNTPKVLAQRSGVPHMVRGRYMFRVDDVVRPAGCSNKTGGTYPIMIYPNIVNMLGDMTVDVNACCLDRTQTYIMMIEEREVATCQVINPAIARCSLPRIYDWGTKTVYFQPESRGANDEKAFVGYIYFVPPTLDPMRLDIGNIYEWYKNPMTNYLMPITWYPRNFTNPDILTNGNNMGVRISDDSMYGVQLGLYIVGYREFKDDEIKKFRPEYRTLARITTYSNQNNANYRWMPQEEVINTNQVQQWYLTDWERMHTLYTYRVGFFKLAPINPNDANGTQLLPGLVSAPISLHWLWTPENQQFATLTLNQQDRDQRIEFVKEKSREMCHDWYDEDGALWNFIRDTETNTSCPCIETQALLDLGRFMPHPRCSQMFRDITCTTVIGSKNCYMSSSNIYSSYAGNGNTFNNMDTNRFMTHYGQVCCYDESGYLMQTPYQPVIKTQREYFYNPGYPLRAYEFGTAPYMGQFEVPGLSVFHNDYMPYFLCCKFADFRCQMFYWRRPSSACQQYQPPAIGHAQGAGVFQTIDNDKFIFNQPGVFNFLYIPQSVRTPEVRIQTRLERYPNRKVDFGLLGRYISQYELVQPTNATVITGIALEATGTERVIVMTRKDTRRFRYRTNIIVGNILRYFDTIRLQRFRGVLIYVNNVERGQPEIYVVLEEAQIGVKVTESYALDIDRLPNYQESMGMLDIQISVSPQYGVRPDGDKTQETQYRQMYNLPRVSGLIRPYPDQTSGSLNEGLTLNDVNSDSYRQQIINNYLVLGTGEPGTQQNQAGTLNQNMPQDNMFTTSRDEDKQFDVFPEASMRSEPVYKTAPIFDTGSYRFVPQTGAMILQLLNTCRDLQNNPNTDLQPYQSIATLSYGLQCPDDPGQVLTECGDSVACLYDYALLNSKVLGQEEQDAWNMFTTDRALAIRQYNSCGAINIEYPEYMMKTPALSSGYLQGDVARFECYQSHWVKGDHEYKCGIVVDYNRPNEYRFEWNKGNQPWCRSRIKENYFKWLAVIAGIVGIIIVILLIFLVFWCIKRKKLQESRNYSGTAAYSNNAFQNQTYETKPSRALSVGDLSTAPRTVAMPPPRGTTATPMTLEPRGFSPVPSDVRGSQGMLGLNTSV</sequence>
<comment type="subcellular location">
    <subcellularLocation>
        <location evidence="7">Membrane</location>
        <topology evidence="7">Single-pass type I membrane protein</topology>
    </subcellularLocation>
</comment>
<evidence type="ECO:0000255" key="1"/>
<evidence type="ECO:0000255" key="2">
    <source>
        <dbReference type="PROSITE-ProRule" id="PRU00347"/>
    </source>
</evidence>
<evidence type="ECO:0000255" key="3">
    <source>
        <dbReference type="PROSITE-ProRule" id="PRU00570"/>
    </source>
</evidence>
<evidence type="ECO:0000256" key="4">
    <source>
        <dbReference type="SAM" id="MobiDB-lite"/>
    </source>
</evidence>
<evidence type="ECO:0000269" key="5">
    <source>
    </source>
</evidence>
<evidence type="ECO:0000269" key="6">
    <source>
    </source>
</evidence>
<evidence type="ECO:0000305" key="7"/>
<keyword id="KW-0325">Glycoprotein</keyword>
<keyword id="KW-0472">Membrane</keyword>
<keyword id="KW-1185">Reference proteome</keyword>
<keyword id="KW-0732">Signal</keyword>
<keyword id="KW-0812">Transmembrane</keyword>
<keyword id="KW-1133">Transmembrane helix</keyword>
<organism>
    <name type="scientific">Caenorhabditis elegans</name>
    <dbReference type="NCBI Taxonomy" id="6239"/>
    <lineage>
        <taxon>Eukaryota</taxon>
        <taxon>Metazoa</taxon>
        <taxon>Ecdysozoa</taxon>
        <taxon>Nematoda</taxon>
        <taxon>Chromadorea</taxon>
        <taxon>Rhabditida</taxon>
        <taxon>Rhabditina</taxon>
        <taxon>Rhabditomorpha</taxon>
        <taxon>Rhabditoidea</taxon>
        <taxon>Rhabditidae</taxon>
        <taxon>Peloderinae</taxon>
        <taxon>Caenorhabditis</taxon>
    </lineage>
</organism>
<name>YF1M_CAEEL</name>
<gene>
    <name type="ORF">R09E10.5</name>
</gene>
<feature type="signal peptide" evidence="1">
    <location>
        <begin position="1"/>
        <end position="25"/>
    </location>
</feature>
<feature type="chain" id="PRO_0000014297" description="Uncharacterized protein R09E10.5">
    <location>
        <begin position="26"/>
        <end position="1437"/>
    </location>
</feature>
<feature type="topological domain" description="Extracellular" evidence="1">
    <location>
        <begin position="26"/>
        <end position="1326"/>
    </location>
</feature>
<feature type="transmembrane region" description="Helical" evidence="1">
    <location>
        <begin position="1327"/>
        <end position="1347"/>
    </location>
</feature>
<feature type="topological domain" description="Cytoplasmic" evidence="1">
    <location>
        <begin position="1348"/>
        <end position="1437"/>
    </location>
</feature>
<feature type="domain" description="NIDO" evidence="3">
    <location>
        <begin position="193"/>
        <end position="356"/>
    </location>
</feature>
<feature type="domain" description="AMOP" evidence="2">
    <location>
        <begin position="648"/>
        <end position="829"/>
    </location>
</feature>
<feature type="region of interest" description="Disordered" evidence="4">
    <location>
        <begin position="1394"/>
        <end position="1419"/>
    </location>
</feature>
<feature type="glycosylation site" description="N-linked (GlcNAc...) asparagine" evidence="1">
    <location>
        <position position="103"/>
    </location>
</feature>
<feature type="glycosylation site" description="N-linked (GlcNAc...) asparagine" evidence="5 6">
    <location>
        <position position="315"/>
    </location>
</feature>
<feature type="glycosylation site" description="N-linked (GlcNAc...) asparagine" evidence="5 6">
    <location>
        <position position="364"/>
    </location>
</feature>
<feature type="glycosylation site" description="N-linked (GlcNAc...) asparagine" evidence="5">
    <location>
        <position position="492"/>
    </location>
</feature>
<feature type="glycosylation site" description="N-linked (GlcNAc...) asparagine" evidence="1">
    <location>
        <position position="605"/>
    </location>
</feature>
<feature type="glycosylation site" description="N-linked (GlcNAc...) asparagine" evidence="5 6">
    <location>
        <position position="676"/>
    </location>
</feature>
<feature type="glycosylation site" description="N-linked (GlcNAc...) asparagine" evidence="5">
    <location>
        <position position="914"/>
    </location>
</feature>
<reference key="1">
    <citation type="journal article" date="1998" name="Science">
        <title>Genome sequence of the nematode C. elegans: a platform for investigating biology.</title>
        <authorList>
            <consortium name="The C. elegans sequencing consortium"/>
        </authorList>
    </citation>
    <scope>NUCLEOTIDE SEQUENCE [LARGE SCALE GENOMIC DNA]</scope>
    <source>
        <strain>Bristol N2</strain>
    </source>
</reference>
<reference key="2">
    <citation type="journal article" date="2005" name="Glycobiology">
        <title>Identification of the hydrophobic glycoproteins of Caenorhabditis elegans.</title>
        <authorList>
            <person name="Fan X."/>
            <person name="She Y.-M."/>
            <person name="Bagshaw R.D."/>
            <person name="Callahan J.W."/>
            <person name="Schachter H."/>
            <person name="Mahuran D.J."/>
        </authorList>
    </citation>
    <scope>GLYCOSYLATION [LARGE SCALE ANALYSIS] AT ASN-315; ASN-364; ASN-492; ASN-676 AND ASN-914</scope>
    <scope>IDENTIFICATION BY MASS SPECTROMETRY</scope>
</reference>
<reference key="3">
    <citation type="journal article" date="2007" name="Mol. Cell. Proteomics">
        <title>Proteomics reveals N-linked glycoprotein diversity in Caenorhabditis elegans and suggests an atypical translocation mechanism for integral membrane proteins.</title>
        <authorList>
            <person name="Kaji H."/>
            <person name="Kamiie J."/>
            <person name="Kawakami H."/>
            <person name="Kido K."/>
            <person name="Yamauchi Y."/>
            <person name="Shinkawa T."/>
            <person name="Taoka M."/>
            <person name="Takahashi N."/>
            <person name="Isobe T."/>
        </authorList>
    </citation>
    <scope>GLYCOSYLATION [LARGE SCALE ANALYSIS] AT ASN-315; ASN-364 AND ASN-676</scope>
    <scope>IDENTIFICATION BY MASS SPECTROMETRY</scope>
    <source>
        <strain>Bristol N2</strain>
    </source>
</reference>
<proteinExistence type="evidence at protein level"/>